<gene>
    <name evidence="1" type="primary">truA</name>
    <name type="ordered locus">Smal_2851</name>
</gene>
<comment type="function">
    <text evidence="1">Formation of pseudouridine at positions 38, 39 and 40 in the anticodon stem and loop of transfer RNAs.</text>
</comment>
<comment type="catalytic activity">
    <reaction evidence="1">
        <text>uridine(38/39/40) in tRNA = pseudouridine(38/39/40) in tRNA</text>
        <dbReference type="Rhea" id="RHEA:22376"/>
        <dbReference type="Rhea" id="RHEA-COMP:10085"/>
        <dbReference type="Rhea" id="RHEA-COMP:10087"/>
        <dbReference type="ChEBI" id="CHEBI:65314"/>
        <dbReference type="ChEBI" id="CHEBI:65315"/>
        <dbReference type="EC" id="5.4.99.12"/>
    </reaction>
</comment>
<comment type="subunit">
    <text evidence="1">Homodimer.</text>
</comment>
<comment type="similarity">
    <text evidence="1">Belongs to the tRNA pseudouridine synthase TruA family.</text>
</comment>
<evidence type="ECO:0000255" key="1">
    <source>
        <dbReference type="HAMAP-Rule" id="MF_00171"/>
    </source>
</evidence>
<sequence>MRYALGVEYDGSDFRGWQNLGEGGPSVQASLEQALSSVADTPLQVVCAGRTDAGVHGQCQVVHFDTDVVRDPRAWMLGTTTRLPRSIAVRWCVPVADDFHARFSARARRYRYRLLNREVRPALERQTLSWERRALDETRMHIAGQALLGENDFNAFRSVQCQALHARRELQSLQVSRHGEVIEVSVQGNAFLHHMVRNIVGSLILVGSGEKPVEWIAELLAGRDRTVAGPTAPPQGLVFLGPLYPDNWHLPAEVTL</sequence>
<dbReference type="EC" id="5.4.99.12" evidence="1"/>
<dbReference type="EMBL" id="CP001111">
    <property type="protein sequence ID" value="ACF52551.1"/>
    <property type="molecule type" value="Genomic_DNA"/>
</dbReference>
<dbReference type="RefSeq" id="WP_006381351.1">
    <property type="nucleotide sequence ID" value="NC_011071.1"/>
</dbReference>
<dbReference type="SMR" id="B4SQV6"/>
<dbReference type="STRING" id="391008.Smal_2851"/>
<dbReference type="KEGG" id="smt:Smal_2851"/>
<dbReference type="eggNOG" id="COG0101">
    <property type="taxonomic scope" value="Bacteria"/>
</dbReference>
<dbReference type="HOGENOM" id="CLU_014673_0_2_6"/>
<dbReference type="OrthoDB" id="9811823at2"/>
<dbReference type="Proteomes" id="UP000001867">
    <property type="component" value="Chromosome"/>
</dbReference>
<dbReference type="GO" id="GO:0003723">
    <property type="term" value="F:RNA binding"/>
    <property type="evidence" value="ECO:0007669"/>
    <property type="project" value="InterPro"/>
</dbReference>
<dbReference type="GO" id="GO:0160147">
    <property type="term" value="F:tRNA pseudouridine(38-40) synthase activity"/>
    <property type="evidence" value="ECO:0007669"/>
    <property type="project" value="UniProtKB-EC"/>
</dbReference>
<dbReference type="GO" id="GO:0031119">
    <property type="term" value="P:tRNA pseudouridine synthesis"/>
    <property type="evidence" value="ECO:0007669"/>
    <property type="project" value="UniProtKB-UniRule"/>
</dbReference>
<dbReference type="CDD" id="cd02570">
    <property type="entry name" value="PseudoU_synth_EcTruA"/>
    <property type="match status" value="1"/>
</dbReference>
<dbReference type="FunFam" id="3.30.70.580:FF:000001">
    <property type="entry name" value="tRNA pseudouridine synthase A"/>
    <property type="match status" value="1"/>
</dbReference>
<dbReference type="Gene3D" id="3.30.70.660">
    <property type="entry name" value="Pseudouridine synthase I, catalytic domain, C-terminal subdomain"/>
    <property type="match status" value="1"/>
</dbReference>
<dbReference type="Gene3D" id="3.30.70.580">
    <property type="entry name" value="Pseudouridine synthase I, catalytic domain, N-terminal subdomain"/>
    <property type="match status" value="1"/>
</dbReference>
<dbReference type="HAMAP" id="MF_00171">
    <property type="entry name" value="TruA"/>
    <property type="match status" value="1"/>
</dbReference>
<dbReference type="InterPro" id="IPR020103">
    <property type="entry name" value="PsdUridine_synth_cat_dom_sf"/>
</dbReference>
<dbReference type="InterPro" id="IPR001406">
    <property type="entry name" value="PsdUridine_synth_TruA"/>
</dbReference>
<dbReference type="InterPro" id="IPR020097">
    <property type="entry name" value="PsdUridine_synth_TruA_a/b_dom"/>
</dbReference>
<dbReference type="InterPro" id="IPR020095">
    <property type="entry name" value="PsdUridine_synth_TruA_C"/>
</dbReference>
<dbReference type="InterPro" id="IPR020094">
    <property type="entry name" value="TruA/RsuA/RluB/E/F_N"/>
</dbReference>
<dbReference type="NCBIfam" id="TIGR00071">
    <property type="entry name" value="hisT_truA"/>
    <property type="match status" value="1"/>
</dbReference>
<dbReference type="PANTHER" id="PTHR11142">
    <property type="entry name" value="PSEUDOURIDYLATE SYNTHASE"/>
    <property type="match status" value="1"/>
</dbReference>
<dbReference type="PANTHER" id="PTHR11142:SF0">
    <property type="entry name" value="TRNA PSEUDOURIDINE SYNTHASE-LIKE 1"/>
    <property type="match status" value="1"/>
</dbReference>
<dbReference type="Pfam" id="PF01416">
    <property type="entry name" value="PseudoU_synth_1"/>
    <property type="match status" value="2"/>
</dbReference>
<dbReference type="PIRSF" id="PIRSF001430">
    <property type="entry name" value="tRNA_psdUrid_synth"/>
    <property type="match status" value="1"/>
</dbReference>
<dbReference type="SUPFAM" id="SSF55120">
    <property type="entry name" value="Pseudouridine synthase"/>
    <property type="match status" value="1"/>
</dbReference>
<organism>
    <name type="scientific">Stenotrophomonas maltophilia (strain R551-3)</name>
    <dbReference type="NCBI Taxonomy" id="391008"/>
    <lineage>
        <taxon>Bacteria</taxon>
        <taxon>Pseudomonadati</taxon>
        <taxon>Pseudomonadota</taxon>
        <taxon>Gammaproteobacteria</taxon>
        <taxon>Lysobacterales</taxon>
        <taxon>Lysobacteraceae</taxon>
        <taxon>Stenotrophomonas</taxon>
        <taxon>Stenotrophomonas maltophilia group</taxon>
    </lineage>
</organism>
<protein>
    <recommendedName>
        <fullName evidence="1">tRNA pseudouridine synthase A</fullName>
        <ecNumber evidence="1">5.4.99.12</ecNumber>
    </recommendedName>
    <alternativeName>
        <fullName evidence="1">tRNA pseudouridine(38-40) synthase</fullName>
    </alternativeName>
    <alternativeName>
        <fullName evidence="1">tRNA pseudouridylate synthase I</fullName>
    </alternativeName>
    <alternativeName>
        <fullName evidence="1">tRNA-uridine isomerase I</fullName>
    </alternativeName>
</protein>
<reference key="1">
    <citation type="submission" date="2008-06" db="EMBL/GenBank/DDBJ databases">
        <title>Complete sequence of Stenotrophomonas maltophilia R551-3.</title>
        <authorList>
            <consortium name="US DOE Joint Genome Institute"/>
            <person name="Lucas S."/>
            <person name="Copeland A."/>
            <person name="Lapidus A."/>
            <person name="Glavina del Rio T."/>
            <person name="Dalin E."/>
            <person name="Tice H."/>
            <person name="Pitluck S."/>
            <person name="Chain P."/>
            <person name="Malfatti S."/>
            <person name="Shin M."/>
            <person name="Vergez L."/>
            <person name="Lang D."/>
            <person name="Schmutz J."/>
            <person name="Larimer F."/>
            <person name="Land M."/>
            <person name="Hauser L."/>
            <person name="Kyrpides N."/>
            <person name="Mikhailova N."/>
            <person name="Taghavi S."/>
            <person name="Monchy S."/>
            <person name="Newman L."/>
            <person name="Vangronsveld J."/>
            <person name="van der Lelie D."/>
            <person name="Richardson P."/>
        </authorList>
    </citation>
    <scope>NUCLEOTIDE SEQUENCE [LARGE SCALE GENOMIC DNA]</scope>
    <source>
        <strain>R551-3</strain>
    </source>
</reference>
<name>TRUA_STRM5</name>
<accession>B4SQV6</accession>
<proteinExistence type="inferred from homology"/>
<feature type="chain" id="PRO_1000097789" description="tRNA pseudouridine synthase A">
    <location>
        <begin position="1"/>
        <end position="256"/>
    </location>
</feature>
<feature type="active site" description="Nucleophile" evidence="1">
    <location>
        <position position="52"/>
    </location>
</feature>
<feature type="binding site" evidence="1">
    <location>
        <position position="110"/>
    </location>
    <ligand>
        <name>substrate</name>
    </ligand>
</feature>
<keyword id="KW-0413">Isomerase</keyword>
<keyword id="KW-0819">tRNA processing</keyword>